<comment type="function">
    <text evidence="1">Phosphorolytic 3'-5' exoribonuclease that plays an important role in tRNA 3'-end maturation. Removes nucleotide residues following the 3'-CCA terminus of tRNAs; can also add nucleotides to the ends of RNA molecules by using nucleoside diphosphates as substrates, but this may not be physiologically important. Probably plays a role in initiation of 16S rRNA degradation (leading to ribosome degradation) during starvation.</text>
</comment>
<comment type="catalytic activity">
    <reaction evidence="1">
        <text>tRNA(n+1) + phosphate = tRNA(n) + a ribonucleoside 5'-diphosphate</text>
        <dbReference type="Rhea" id="RHEA:10628"/>
        <dbReference type="Rhea" id="RHEA-COMP:17343"/>
        <dbReference type="Rhea" id="RHEA-COMP:17344"/>
        <dbReference type="ChEBI" id="CHEBI:43474"/>
        <dbReference type="ChEBI" id="CHEBI:57930"/>
        <dbReference type="ChEBI" id="CHEBI:173114"/>
        <dbReference type="EC" id="2.7.7.56"/>
    </reaction>
</comment>
<comment type="subunit">
    <text evidence="1">Homohexameric ring arranged as a trimer of dimers.</text>
</comment>
<comment type="similarity">
    <text evidence="1">Belongs to the RNase PH family.</text>
</comment>
<proteinExistence type="inferred from homology"/>
<protein>
    <recommendedName>
        <fullName evidence="1">Ribonuclease PH</fullName>
        <shortName evidence="1">RNase PH</shortName>
        <ecNumber evidence="1">2.7.7.56</ecNumber>
    </recommendedName>
    <alternativeName>
        <fullName evidence="1">tRNA nucleotidyltransferase</fullName>
    </alternativeName>
</protein>
<name>RNPH_MYCA9</name>
<accession>B1MLZ3</accession>
<organism>
    <name type="scientific">Mycobacteroides abscessus (strain ATCC 19977 / DSM 44196 / CCUG 20993 / CIP 104536 / JCM 13569 / NCTC 13031 / TMC 1543 / L948)</name>
    <name type="common">Mycobacterium abscessus</name>
    <dbReference type="NCBI Taxonomy" id="561007"/>
    <lineage>
        <taxon>Bacteria</taxon>
        <taxon>Bacillati</taxon>
        <taxon>Actinomycetota</taxon>
        <taxon>Actinomycetes</taxon>
        <taxon>Mycobacteriales</taxon>
        <taxon>Mycobacteriaceae</taxon>
        <taxon>Mycobacteroides</taxon>
        <taxon>Mycobacteroides abscessus</taxon>
    </lineage>
</organism>
<reference key="1">
    <citation type="journal article" date="2009" name="PLoS ONE">
        <title>Non mycobacterial virulence genes in the genome of the emerging pathogen Mycobacterium abscessus.</title>
        <authorList>
            <person name="Ripoll F."/>
            <person name="Pasek S."/>
            <person name="Schenowitz C."/>
            <person name="Dossat C."/>
            <person name="Barbe V."/>
            <person name="Rottman M."/>
            <person name="Macheras E."/>
            <person name="Heym B."/>
            <person name="Herrmann J.L."/>
            <person name="Daffe M."/>
            <person name="Brosch R."/>
            <person name="Risler J.L."/>
            <person name="Gaillard J.L."/>
        </authorList>
    </citation>
    <scope>NUCLEOTIDE SEQUENCE [LARGE SCALE GENOMIC DNA]</scope>
    <source>
        <strain>ATCC 19977 / DSM 44196 / CCUG 20993 / CIP 104536 / JCM 13569 / NCTC 13031 / TMC 1543 / L948</strain>
    </source>
</reference>
<sequence>MSRREDGRQDDELRPVTITRGFTSHPAGSVLIEFGQTRVMCTASATEGVPRWRKGSGLGWLTAEYAMLPASTHTRSDRESVKGRVGGRTQEISRLIGRSLRACIDLSALGENTIAIDCDVLQADGGTRTAAITGAYVALADAVTYLAAHGKLADDEPLSCAIAAVSVGVVDGRVRVDLPYEEDSRAEVDMNVVATDTGTLVEVQGTGEGATFARSTLDKLLDAAVGAADQLFVLQKEALALPYPGVLPDAPQKKAFGS</sequence>
<gene>
    <name evidence="1" type="primary">rph</name>
    <name type="ordered locus">MAB_1484</name>
</gene>
<feature type="chain" id="PRO_1000129353" description="Ribonuclease PH">
    <location>
        <begin position="1"/>
        <end position="258"/>
    </location>
</feature>
<feature type="binding site" evidence="1">
    <location>
        <position position="88"/>
    </location>
    <ligand>
        <name>phosphate</name>
        <dbReference type="ChEBI" id="CHEBI:43474"/>
        <note>substrate</note>
    </ligand>
</feature>
<feature type="binding site" evidence="1">
    <location>
        <begin position="126"/>
        <end position="128"/>
    </location>
    <ligand>
        <name>phosphate</name>
        <dbReference type="ChEBI" id="CHEBI:43474"/>
        <note>substrate</note>
    </ligand>
</feature>
<evidence type="ECO:0000255" key="1">
    <source>
        <dbReference type="HAMAP-Rule" id="MF_00564"/>
    </source>
</evidence>
<dbReference type="EC" id="2.7.7.56" evidence="1"/>
<dbReference type="EMBL" id="CU458896">
    <property type="protein sequence ID" value="CAM61570.1"/>
    <property type="molecule type" value="Genomic_DNA"/>
</dbReference>
<dbReference type="RefSeq" id="WP_005059918.1">
    <property type="nucleotide sequence ID" value="NZ_MLCG01000002.1"/>
</dbReference>
<dbReference type="SMR" id="B1MLZ3"/>
<dbReference type="GeneID" id="93378432"/>
<dbReference type="KEGG" id="mab:MAB_1484"/>
<dbReference type="Proteomes" id="UP000007137">
    <property type="component" value="Chromosome"/>
</dbReference>
<dbReference type="GO" id="GO:0000175">
    <property type="term" value="F:3'-5'-RNA exonuclease activity"/>
    <property type="evidence" value="ECO:0007669"/>
    <property type="project" value="UniProtKB-UniRule"/>
</dbReference>
<dbReference type="GO" id="GO:0000049">
    <property type="term" value="F:tRNA binding"/>
    <property type="evidence" value="ECO:0007669"/>
    <property type="project" value="UniProtKB-UniRule"/>
</dbReference>
<dbReference type="GO" id="GO:0009022">
    <property type="term" value="F:tRNA nucleotidyltransferase activity"/>
    <property type="evidence" value="ECO:0007669"/>
    <property type="project" value="UniProtKB-UniRule"/>
</dbReference>
<dbReference type="GO" id="GO:0016075">
    <property type="term" value="P:rRNA catabolic process"/>
    <property type="evidence" value="ECO:0007669"/>
    <property type="project" value="UniProtKB-UniRule"/>
</dbReference>
<dbReference type="GO" id="GO:0006364">
    <property type="term" value="P:rRNA processing"/>
    <property type="evidence" value="ECO:0007669"/>
    <property type="project" value="UniProtKB-KW"/>
</dbReference>
<dbReference type="GO" id="GO:0008033">
    <property type="term" value="P:tRNA processing"/>
    <property type="evidence" value="ECO:0007669"/>
    <property type="project" value="UniProtKB-UniRule"/>
</dbReference>
<dbReference type="CDD" id="cd11362">
    <property type="entry name" value="RNase_PH_bact"/>
    <property type="match status" value="1"/>
</dbReference>
<dbReference type="FunFam" id="3.30.230.70:FF:000003">
    <property type="entry name" value="Ribonuclease PH"/>
    <property type="match status" value="1"/>
</dbReference>
<dbReference type="Gene3D" id="3.30.230.70">
    <property type="entry name" value="GHMP Kinase, N-terminal domain"/>
    <property type="match status" value="1"/>
</dbReference>
<dbReference type="HAMAP" id="MF_00564">
    <property type="entry name" value="RNase_PH"/>
    <property type="match status" value="1"/>
</dbReference>
<dbReference type="InterPro" id="IPR001247">
    <property type="entry name" value="ExoRNase_PH_dom1"/>
</dbReference>
<dbReference type="InterPro" id="IPR015847">
    <property type="entry name" value="ExoRNase_PH_dom2"/>
</dbReference>
<dbReference type="InterPro" id="IPR036345">
    <property type="entry name" value="ExoRNase_PH_dom2_sf"/>
</dbReference>
<dbReference type="InterPro" id="IPR027408">
    <property type="entry name" value="PNPase/RNase_PH_dom_sf"/>
</dbReference>
<dbReference type="InterPro" id="IPR020568">
    <property type="entry name" value="Ribosomal_Su5_D2-typ_SF"/>
</dbReference>
<dbReference type="InterPro" id="IPR050080">
    <property type="entry name" value="RNase_PH"/>
</dbReference>
<dbReference type="InterPro" id="IPR002381">
    <property type="entry name" value="RNase_PH_bac-type"/>
</dbReference>
<dbReference type="InterPro" id="IPR018336">
    <property type="entry name" value="RNase_PH_CS"/>
</dbReference>
<dbReference type="NCBIfam" id="TIGR01966">
    <property type="entry name" value="RNasePH"/>
    <property type="match status" value="1"/>
</dbReference>
<dbReference type="PANTHER" id="PTHR11953">
    <property type="entry name" value="EXOSOME COMPLEX COMPONENT"/>
    <property type="match status" value="1"/>
</dbReference>
<dbReference type="PANTHER" id="PTHR11953:SF0">
    <property type="entry name" value="EXOSOME COMPLEX COMPONENT RRP41"/>
    <property type="match status" value="1"/>
</dbReference>
<dbReference type="Pfam" id="PF01138">
    <property type="entry name" value="RNase_PH"/>
    <property type="match status" value="1"/>
</dbReference>
<dbReference type="Pfam" id="PF03725">
    <property type="entry name" value="RNase_PH_C"/>
    <property type="match status" value="1"/>
</dbReference>
<dbReference type="SUPFAM" id="SSF55666">
    <property type="entry name" value="Ribonuclease PH domain 2-like"/>
    <property type="match status" value="1"/>
</dbReference>
<dbReference type="SUPFAM" id="SSF54211">
    <property type="entry name" value="Ribosomal protein S5 domain 2-like"/>
    <property type="match status" value="1"/>
</dbReference>
<dbReference type="PROSITE" id="PS01277">
    <property type="entry name" value="RIBONUCLEASE_PH"/>
    <property type="match status" value="1"/>
</dbReference>
<keyword id="KW-0548">Nucleotidyltransferase</keyword>
<keyword id="KW-1185">Reference proteome</keyword>
<keyword id="KW-0694">RNA-binding</keyword>
<keyword id="KW-0698">rRNA processing</keyword>
<keyword id="KW-0808">Transferase</keyword>
<keyword id="KW-0819">tRNA processing</keyword>
<keyword id="KW-0820">tRNA-binding</keyword>